<accession>A8FNQ6</accession>
<protein>
    <recommendedName>
        <fullName evidence="1">Small ribosomal subunit protein uS4</fullName>
    </recommendedName>
    <alternativeName>
        <fullName evidence="2">30S ribosomal protein S4</fullName>
    </alternativeName>
</protein>
<organism>
    <name type="scientific">Campylobacter jejuni subsp. jejuni serotype O:6 (strain 81116 / NCTC 11828)</name>
    <dbReference type="NCBI Taxonomy" id="407148"/>
    <lineage>
        <taxon>Bacteria</taxon>
        <taxon>Pseudomonadati</taxon>
        <taxon>Campylobacterota</taxon>
        <taxon>Epsilonproteobacteria</taxon>
        <taxon>Campylobacterales</taxon>
        <taxon>Campylobacteraceae</taxon>
        <taxon>Campylobacter</taxon>
    </lineage>
</organism>
<evidence type="ECO:0000255" key="1">
    <source>
        <dbReference type="HAMAP-Rule" id="MF_01306"/>
    </source>
</evidence>
<evidence type="ECO:0000305" key="2"/>
<proteinExistence type="inferred from homology"/>
<comment type="function">
    <text evidence="1">One of the primary rRNA binding proteins, it binds directly to 16S rRNA where it nucleates assembly of the body of the 30S subunit.</text>
</comment>
<comment type="function">
    <text evidence="1">With S5 and S12 plays an important role in translational accuracy.</text>
</comment>
<comment type="subunit">
    <text evidence="1">Part of the 30S ribosomal subunit. Contacts protein S5. The interaction surface between S4 and S5 is involved in control of translational fidelity.</text>
</comment>
<comment type="similarity">
    <text evidence="1">Belongs to the universal ribosomal protein uS4 family.</text>
</comment>
<feature type="chain" id="PRO_0000322283" description="Small ribosomal subunit protein uS4">
    <location>
        <begin position="1"/>
        <end position="208"/>
    </location>
</feature>
<feature type="domain" description="S4 RNA-binding" evidence="1">
    <location>
        <begin position="98"/>
        <end position="163"/>
    </location>
</feature>
<name>RS4_CAMJ8</name>
<sequence>MARYRGPVEKLERRFGVSLALKGERRLAGKSALDKRPYAPGQHGARKGKISEYGLQLREKQKAKFMYGVSEKQFRRLFAEAARREGNTGVLLIQLLEQRLDNVVYRMGFATTRRFARQLVTHGHVLVNGKRVDIPSFRVEAGAKIEIIEKSKNNPQITRAIELTAQTGIVAWVDVEKDKRFGIFTRKPEREEVVIPVEERFIVELYSK</sequence>
<keyword id="KW-0687">Ribonucleoprotein</keyword>
<keyword id="KW-0689">Ribosomal protein</keyword>
<keyword id="KW-0694">RNA-binding</keyword>
<keyword id="KW-0699">rRNA-binding</keyword>
<dbReference type="EMBL" id="CP000814">
    <property type="protein sequence ID" value="ABV53093.1"/>
    <property type="molecule type" value="Genomic_DNA"/>
</dbReference>
<dbReference type="RefSeq" id="WP_002856574.1">
    <property type="nucleotide sequence ID" value="NC_009839.1"/>
</dbReference>
<dbReference type="SMR" id="A8FNQ6"/>
<dbReference type="KEGG" id="cju:C8J_1496"/>
<dbReference type="HOGENOM" id="CLU_092403_0_2_7"/>
<dbReference type="GO" id="GO:0015935">
    <property type="term" value="C:small ribosomal subunit"/>
    <property type="evidence" value="ECO:0007669"/>
    <property type="project" value="InterPro"/>
</dbReference>
<dbReference type="GO" id="GO:0019843">
    <property type="term" value="F:rRNA binding"/>
    <property type="evidence" value="ECO:0007669"/>
    <property type="project" value="UniProtKB-UniRule"/>
</dbReference>
<dbReference type="GO" id="GO:0003735">
    <property type="term" value="F:structural constituent of ribosome"/>
    <property type="evidence" value="ECO:0007669"/>
    <property type="project" value="InterPro"/>
</dbReference>
<dbReference type="GO" id="GO:0042274">
    <property type="term" value="P:ribosomal small subunit biogenesis"/>
    <property type="evidence" value="ECO:0007669"/>
    <property type="project" value="TreeGrafter"/>
</dbReference>
<dbReference type="GO" id="GO:0006412">
    <property type="term" value="P:translation"/>
    <property type="evidence" value="ECO:0007669"/>
    <property type="project" value="UniProtKB-UniRule"/>
</dbReference>
<dbReference type="CDD" id="cd00165">
    <property type="entry name" value="S4"/>
    <property type="match status" value="1"/>
</dbReference>
<dbReference type="FunFam" id="1.10.1050.10:FF:000001">
    <property type="entry name" value="30S ribosomal protein S4"/>
    <property type="match status" value="1"/>
</dbReference>
<dbReference type="FunFam" id="3.10.290.10:FF:000001">
    <property type="entry name" value="30S ribosomal protein S4"/>
    <property type="match status" value="1"/>
</dbReference>
<dbReference type="Gene3D" id="1.10.1050.10">
    <property type="entry name" value="Ribosomal Protein S4 Delta 41, Chain A, domain 1"/>
    <property type="match status" value="1"/>
</dbReference>
<dbReference type="Gene3D" id="3.10.290.10">
    <property type="entry name" value="RNA-binding S4 domain"/>
    <property type="match status" value="1"/>
</dbReference>
<dbReference type="HAMAP" id="MF_01306_B">
    <property type="entry name" value="Ribosomal_uS4_B"/>
    <property type="match status" value="1"/>
</dbReference>
<dbReference type="InterPro" id="IPR022801">
    <property type="entry name" value="Ribosomal_uS4"/>
</dbReference>
<dbReference type="InterPro" id="IPR005709">
    <property type="entry name" value="Ribosomal_uS4_bac-type"/>
</dbReference>
<dbReference type="InterPro" id="IPR018079">
    <property type="entry name" value="Ribosomal_uS4_CS"/>
</dbReference>
<dbReference type="InterPro" id="IPR001912">
    <property type="entry name" value="Ribosomal_uS4_N"/>
</dbReference>
<dbReference type="InterPro" id="IPR002942">
    <property type="entry name" value="S4_RNA-bd"/>
</dbReference>
<dbReference type="InterPro" id="IPR036986">
    <property type="entry name" value="S4_RNA-bd_sf"/>
</dbReference>
<dbReference type="NCBIfam" id="NF003717">
    <property type="entry name" value="PRK05327.1"/>
    <property type="match status" value="1"/>
</dbReference>
<dbReference type="NCBIfam" id="TIGR01017">
    <property type="entry name" value="rpsD_bact"/>
    <property type="match status" value="1"/>
</dbReference>
<dbReference type="PANTHER" id="PTHR11831">
    <property type="entry name" value="30S 40S RIBOSOMAL PROTEIN"/>
    <property type="match status" value="1"/>
</dbReference>
<dbReference type="PANTHER" id="PTHR11831:SF4">
    <property type="entry name" value="SMALL RIBOSOMAL SUBUNIT PROTEIN US4M"/>
    <property type="match status" value="1"/>
</dbReference>
<dbReference type="Pfam" id="PF00163">
    <property type="entry name" value="Ribosomal_S4"/>
    <property type="match status" value="1"/>
</dbReference>
<dbReference type="Pfam" id="PF01479">
    <property type="entry name" value="S4"/>
    <property type="match status" value="1"/>
</dbReference>
<dbReference type="SMART" id="SM01390">
    <property type="entry name" value="Ribosomal_S4"/>
    <property type="match status" value="1"/>
</dbReference>
<dbReference type="SMART" id="SM00363">
    <property type="entry name" value="S4"/>
    <property type="match status" value="1"/>
</dbReference>
<dbReference type="SUPFAM" id="SSF55174">
    <property type="entry name" value="Alpha-L RNA-binding motif"/>
    <property type="match status" value="1"/>
</dbReference>
<dbReference type="PROSITE" id="PS00632">
    <property type="entry name" value="RIBOSOMAL_S4"/>
    <property type="match status" value="1"/>
</dbReference>
<dbReference type="PROSITE" id="PS50889">
    <property type="entry name" value="S4"/>
    <property type="match status" value="1"/>
</dbReference>
<reference key="1">
    <citation type="journal article" date="2007" name="J. Bacteriol.">
        <title>The complete genome sequence of Campylobacter jejuni strain 81116 (NCTC11828).</title>
        <authorList>
            <person name="Pearson B.M."/>
            <person name="Gaskin D.J.H."/>
            <person name="Segers R.P.A.M."/>
            <person name="Wells J.M."/>
            <person name="Nuijten P.J.M."/>
            <person name="van Vliet A.H.M."/>
        </authorList>
    </citation>
    <scope>NUCLEOTIDE SEQUENCE [LARGE SCALE GENOMIC DNA]</scope>
    <source>
        <strain>81116 / NCTC 11828</strain>
    </source>
</reference>
<gene>
    <name evidence="1" type="primary">rpsD</name>
    <name type="ordered locus">C8J_1496</name>
</gene>